<protein>
    <recommendedName>
        <fullName evidence="1">Protein PsbN</fullName>
    </recommendedName>
</protein>
<comment type="function">
    <text evidence="1">May play a role in photosystem I and II biogenesis.</text>
</comment>
<comment type="subcellular location">
    <subcellularLocation>
        <location evidence="1">Plastid</location>
        <location evidence="1">Chloroplast thylakoid membrane</location>
        <topology evidence="1">Single-pass membrane protein</topology>
    </subcellularLocation>
</comment>
<comment type="similarity">
    <text evidence="1">Belongs to the PsbN family.</text>
</comment>
<comment type="caution">
    <text evidence="1">Originally thought to be a component of PSII; based on experiments in Synechocystis, N.tabacum and barley, and its absence from PSII in T.elongatus and T.vulcanus, this is probably not true.</text>
</comment>
<name>PSBN_ARATH</name>
<geneLocation type="chloroplast"/>
<organism>
    <name type="scientific">Arabidopsis thaliana</name>
    <name type="common">Mouse-ear cress</name>
    <dbReference type="NCBI Taxonomy" id="3702"/>
    <lineage>
        <taxon>Eukaryota</taxon>
        <taxon>Viridiplantae</taxon>
        <taxon>Streptophyta</taxon>
        <taxon>Embryophyta</taxon>
        <taxon>Tracheophyta</taxon>
        <taxon>Spermatophyta</taxon>
        <taxon>Magnoliopsida</taxon>
        <taxon>eudicotyledons</taxon>
        <taxon>Gunneridae</taxon>
        <taxon>Pentapetalae</taxon>
        <taxon>rosids</taxon>
        <taxon>malvids</taxon>
        <taxon>Brassicales</taxon>
        <taxon>Brassicaceae</taxon>
        <taxon>Camelineae</taxon>
        <taxon>Arabidopsis</taxon>
    </lineage>
</organism>
<sequence length="43" mass="4722">METATLVAIFISGLLVSFTGYALYTAFGQPSQQLRDPFEEHGD</sequence>
<dbReference type="EMBL" id="AP000423">
    <property type="protein sequence ID" value="BAA84413.1"/>
    <property type="molecule type" value="Genomic_DNA"/>
</dbReference>
<dbReference type="RefSeq" id="NP_051086.1">
    <property type="nucleotide sequence ID" value="NC_000932.1"/>
</dbReference>
<dbReference type="SMR" id="P62113"/>
<dbReference type="FunCoup" id="P62113">
    <property type="interactions" value="40"/>
</dbReference>
<dbReference type="STRING" id="3702.P62113"/>
<dbReference type="PaxDb" id="3702-ATCG00700.1"/>
<dbReference type="ProteomicsDB" id="226416"/>
<dbReference type="EnsemblPlants" id="ATCG00700.1">
    <property type="protein sequence ID" value="ATCG00700.1"/>
    <property type="gene ID" value="ATCG00700"/>
</dbReference>
<dbReference type="GeneID" id="844732"/>
<dbReference type="Gramene" id="ATCG00700.1">
    <property type="protein sequence ID" value="ATCG00700.1"/>
    <property type="gene ID" value="ATCG00700"/>
</dbReference>
<dbReference type="KEGG" id="ath:ArthCp051"/>
<dbReference type="Araport" id="ATCG00700"/>
<dbReference type="TAIR" id="ATCG00700">
    <property type="gene designation" value="PSBN"/>
</dbReference>
<dbReference type="eggNOG" id="ENOG502S8EW">
    <property type="taxonomic scope" value="Eukaryota"/>
</dbReference>
<dbReference type="HOGENOM" id="CLU_205504_2_0_1"/>
<dbReference type="InParanoid" id="P62113"/>
<dbReference type="PRO" id="PR:P62113"/>
<dbReference type="Proteomes" id="UP000006548">
    <property type="component" value="Chloroplast Pltd"/>
</dbReference>
<dbReference type="ExpressionAtlas" id="P62113">
    <property type="expression patterns" value="baseline and differential"/>
</dbReference>
<dbReference type="GO" id="GO:0009535">
    <property type="term" value="C:chloroplast thylakoid membrane"/>
    <property type="evidence" value="ECO:0007669"/>
    <property type="project" value="UniProtKB-SubCell"/>
</dbReference>
<dbReference type="GO" id="GO:0015979">
    <property type="term" value="P:photosynthesis"/>
    <property type="evidence" value="ECO:0007669"/>
    <property type="project" value="InterPro"/>
</dbReference>
<dbReference type="HAMAP" id="MF_00293">
    <property type="entry name" value="PSII_PsbN"/>
    <property type="match status" value="1"/>
</dbReference>
<dbReference type="InterPro" id="IPR003398">
    <property type="entry name" value="PSII_PsbN"/>
</dbReference>
<dbReference type="PANTHER" id="PTHR35326">
    <property type="entry name" value="PROTEIN PSBN"/>
    <property type="match status" value="1"/>
</dbReference>
<dbReference type="PANTHER" id="PTHR35326:SF3">
    <property type="entry name" value="PROTEIN PSBN"/>
    <property type="match status" value="1"/>
</dbReference>
<dbReference type="Pfam" id="PF02468">
    <property type="entry name" value="PsbN"/>
    <property type="match status" value="1"/>
</dbReference>
<keyword id="KW-0150">Chloroplast</keyword>
<keyword id="KW-0472">Membrane</keyword>
<keyword id="KW-0934">Plastid</keyword>
<keyword id="KW-1185">Reference proteome</keyword>
<keyword id="KW-0793">Thylakoid</keyword>
<keyword id="KW-0812">Transmembrane</keyword>
<keyword id="KW-1133">Transmembrane helix</keyword>
<gene>
    <name evidence="1" type="primary">psbN</name>
    <name type="ordered locus">AtCg00700</name>
</gene>
<reference key="1">
    <citation type="journal article" date="1999" name="DNA Res.">
        <title>Complete structure of the chloroplast genome of Arabidopsis thaliana.</title>
        <authorList>
            <person name="Sato S."/>
            <person name="Nakamura Y."/>
            <person name="Kaneko T."/>
            <person name="Asamizu E."/>
            <person name="Tabata S."/>
        </authorList>
    </citation>
    <scope>NUCLEOTIDE SEQUENCE [LARGE SCALE GENOMIC DNA]</scope>
    <source>
        <strain>cv. Columbia</strain>
    </source>
</reference>
<accession>P62113</accession>
<accession>P12172</accession>
<evidence type="ECO:0000255" key="1">
    <source>
        <dbReference type="HAMAP-Rule" id="MF_00293"/>
    </source>
</evidence>
<proteinExistence type="inferred from homology"/>
<feature type="chain" id="PRO_0000207867" description="Protein PsbN">
    <location>
        <begin position="1"/>
        <end position="43"/>
    </location>
</feature>
<feature type="transmembrane region" description="Helical" evidence="1">
    <location>
        <begin position="7"/>
        <end position="27"/>
    </location>
</feature>